<gene>
    <name evidence="8" type="primary">Stra6l</name>
    <name evidence="3 8" type="synonym">Rbpr2</name>
</gene>
<dbReference type="EMBL" id="AK004855">
    <property type="protein sequence ID" value="BAB23619.1"/>
    <property type="molecule type" value="mRNA"/>
</dbReference>
<dbReference type="EMBL" id="AK050348">
    <property type="protein sequence ID" value="BAC34204.1"/>
    <property type="molecule type" value="mRNA"/>
</dbReference>
<dbReference type="EMBL" id="AK050152">
    <property type="protein sequence ID" value="BAC34096.1"/>
    <property type="molecule type" value="mRNA"/>
</dbReference>
<dbReference type="EMBL" id="AL772381">
    <property type="status" value="NOT_ANNOTATED_CDS"/>
    <property type="molecule type" value="Genomic_DNA"/>
</dbReference>
<dbReference type="EMBL" id="CH466565">
    <property type="protein sequence ID" value="EDL02387.1"/>
    <property type="molecule type" value="Genomic_DNA"/>
</dbReference>
<dbReference type="EMBL" id="BC112408">
    <property type="protein sequence ID" value="AAI12409.1"/>
    <property type="molecule type" value="mRNA"/>
</dbReference>
<dbReference type="EMBL" id="BC111889">
    <property type="protein sequence ID" value="AAI11890.1"/>
    <property type="molecule type" value="mRNA"/>
</dbReference>
<dbReference type="CCDS" id="CCDS18141.1">
    <molecule id="Q9DBN1-1"/>
</dbReference>
<dbReference type="CCDS" id="CCDS80094.1">
    <molecule id="Q9DBN1-2"/>
</dbReference>
<dbReference type="RefSeq" id="NP_001292350.1">
    <molecule id="Q9DBN1-2"/>
    <property type="nucleotide sequence ID" value="NM_001305421.1"/>
</dbReference>
<dbReference type="RefSeq" id="NP_083064.2">
    <molecule id="Q9DBN1-1"/>
    <property type="nucleotide sequence ID" value="NM_028788.4"/>
</dbReference>
<dbReference type="RefSeq" id="XP_006538375.1">
    <molecule id="Q9DBN1-1"/>
    <property type="nucleotide sequence ID" value="XM_006538312.2"/>
</dbReference>
<dbReference type="RefSeq" id="XP_006538376.1">
    <molecule id="Q9DBN1-2"/>
    <property type="nucleotide sequence ID" value="XM_006538313.2"/>
</dbReference>
<dbReference type="RefSeq" id="XP_006538377.1">
    <molecule id="Q9DBN1-2"/>
    <property type="nucleotide sequence ID" value="XM_006538314.3"/>
</dbReference>
<dbReference type="RefSeq" id="XP_006538378.1">
    <molecule id="Q9DBN1-2"/>
    <property type="nucleotide sequence ID" value="XM_006538315.2"/>
</dbReference>
<dbReference type="RefSeq" id="XP_017175902.1">
    <property type="nucleotide sequence ID" value="XM_017320413.1"/>
</dbReference>
<dbReference type="RefSeq" id="XP_036020387.1">
    <molecule id="Q9DBN1-1"/>
    <property type="nucleotide sequence ID" value="XM_036164494.1"/>
</dbReference>
<dbReference type="SMR" id="Q9DBN1"/>
<dbReference type="FunCoup" id="Q9DBN1">
    <property type="interactions" value="793"/>
</dbReference>
<dbReference type="STRING" id="10090.ENSMUSP00000103412"/>
<dbReference type="TCDB" id="2.A.90.2.5">
    <property type="family name" value="the vitamin a receptor/transporter (stra6) family"/>
</dbReference>
<dbReference type="GlyCosmos" id="Q9DBN1">
    <property type="glycosylation" value="1 site, No reported glycans"/>
</dbReference>
<dbReference type="GlyGen" id="Q9DBN1">
    <property type="glycosylation" value="2 sites, 1 O-linked glycan (1 site)"/>
</dbReference>
<dbReference type="iPTMnet" id="Q9DBN1"/>
<dbReference type="PhosphoSitePlus" id="Q9DBN1"/>
<dbReference type="jPOST" id="Q9DBN1"/>
<dbReference type="PaxDb" id="10090-ENSMUSP00000103412"/>
<dbReference type="ProteomicsDB" id="254594">
    <molecule id="Q9DBN1-1"/>
</dbReference>
<dbReference type="ProteomicsDB" id="254595">
    <molecule id="Q9DBN1-2"/>
</dbReference>
<dbReference type="Ensembl" id="ENSMUST00000030011.6">
    <molecule id="Q9DBN1-1"/>
    <property type="protein sequence ID" value="ENSMUSP00000030011.6"/>
    <property type="gene ID" value="ENSMUSG00000028327.15"/>
</dbReference>
<dbReference type="Ensembl" id="ENSMUST00000107782.8">
    <molecule id="Q9DBN1-2"/>
    <property type="protein sequence ID" value="ENSMUSP00000103411.2"/>
    <property type="gene ID" value="ENSMUSG00000028327.15"/>
</dbReference>
<dbReference type="Ensembl" id="ENSMUST00000107783.8">
    <molecule id="Q9DBN1-1"/>
    <property type="protein sequence ID" value="ENSMUSP00000103412.2"/>
    <property type="gene ID" value="ENSMUSG00000028327.15"/>
</dbReference>
<dbReference type="GeneID" id="74152"/>
<dbReference type="KEGG" id="mmu:74152"/>
<dbReference type="UCSC" id="uc008ssz.3">
    <molecule id="Q9DBN1-1"/>
    <property type="organism name" value="mouse"/>
</dbReference>
<dbReference type="AGR" id="MGI:1921402"/>
<dbReference type="CTD" id="74152"/>
<dbReference type="MGI" id="MGI:1921402">
    <property type="gene designation" value="Stra6l"/>
</dbReference>
<dbReference type="VEuPathDB" id="HostDB:ENSMUSG00000028327"/>
<dbReference type="eggNOG" id="KOG1105">
    <property type="taxonomic scope" value="Eukaryota"/>
</dbReference>
<dbReference type="GeneTree" id="ENSGT00940000153246"/>
<dbReference type="InParanoid" id="Q9DBN1"/>
<dbReference type="OMA" id="RFIYMLV"/>
<dbReference type="OrthoDB" id="2376984at2759"/>
<dbReference type="PhylomeDB" id="Q9DBN1"/>
<dbReference type="TreeFam" id="TF331851"/>
<dbReference type="BioGRID-ORCS" id="74152">
    <property type="hits" value="1 hit in 61 CRISPR screens"/>
</dbReference>
<dbReference type="ChiTaRS" id="Stra6l">
    <property type="organism name" value="mouse"/>
</dbReference>
<dbReference type="PRO" id="PR:Q9DBN1"/>
<dbReference type="Proteomes" id="UP000000589">
    <property type="component" value="Chromosome 4"/>
</dbReference>
<dbReference type="RNAct" id="Q9DBN1">
    <property type="molecule type" value="protein"/>
</dbReference>
<dbReference type="Bgee" id="ENSMUSG00000028327">
    <property type="expression patterns" value="Expressed in left lobe of liver and 46 other cell types or tissues"/>
</dbReference>
<dbReference type="GO" id="GO:0005886">
    <property type="term" value="C:plasma membrane"/>
    <property type="evidence" value="ECO:0000314"/>
    <property type="project" value="MGI"/>
</dbReference>
<dbReference type="GO" id="GO:0034632">
    <property type="term" value="F:retinol transmembrane transporter activity"/>
    <property type="evidence" value="ECO:0007669"/>
    <property type="project" value="InterPro"/>
</dbReference>
<dbReference type="GO" id="GO:0038023">
    <property type="term" value="F:signaling receptor activity"/>
    <property type="evidence" value="ECO:0007669"/>
    <property type="project" value="InterPro"/>
</dbReference>
<dbReference type="GO" id="GO:0051649">
    <property type="term" value="P:establishment of localization in cell"/>
    <property type="evidence" value="ECO:0000315"/>
    <property type="project" value="MGI"/>
</dbReference>
<dbReference type="GO" id="GO:0034633">
    <property type="term" value="P:retinol transport"/>
    <property type="evidence" value="ECO:0000316"/>
    <property type="project" value="MGI"/>
</dbReference>
<dbReference type="GO" id="GO:0071939">
    <property type="term" value="P:vitamin A import into cell"/>
    <property type="evidence" value="ECO:0000315"/>
    <property type="project" value="MGI"/>
</dbReference>
<dbReference type="InterPro" id="IPR026612">
    <property type="entry name" value="STRA6-like"/>
</dbReference>
<dbReference type="PANTHER" id="PTHR21444">
    <property type="entry name" value="COILED-COIL DOMAIN-CONTAINING PROTEIN 180"/>
    <property type="match status" value="1"/>
</dbReference>
<dbReference type="PANTHER" id="PTHR21444:SF17">
    <property type="entry name" value="STIMULATED BY RETINOIC ACID GENE 6 PROTEIN-LIKE"/>
    <property type="match status" value="1"/>
</dbReference>
<dbReference type="Pfam" id="PF14752">
    <property type="entry name" value="RBP_receptor"/>
    <property type="match status" value="1"/>
</dbReference>
<sequence>MLAASTRTRQINITCDNPVDREVFLHYSLIPSLCIILVLSFLQRREHRRQRDDTSYLLGNHFGIIVPLDFVGTFSNRWSYGAAFGATANKVMFLFSEGYQPLTVPQWAQAFVLFIGGMEVGLSYFPFFACLSSEFQLVSSILGFSYSLTWFVVTVLQISQCPHGQFLGRFETLVFYWPSLLCLGFLLGRFLHMFLKALPVHLGLEPQTEEKSMLEAHQAKHVKQLLSKPRPQEGEKSWFQTRVYEWDPCFQFPSRMVGTLLLAFICLYLFIVIEFCVFLHVRDKLDMFEDKLESYLTHMNETGTLTPIILQVKELISVTKGVWVVTILPAALTCVTYLFHILACYRKHMKRLWAGDKHFLPQKFHSPSSAASVVAIARYSGWQIAYILWGYLIIHVVQSLCGVMLMYGLVLPIIHHRGLEMLQGFGLGVLTLSIVVGLIILQVWIAGTFFLQPKLGTSDKQKPLALNNRRAFHNFNYFLFFYNVLLGLGACLSRLLISCLLGTWLIARIDRTIMQSGYEGADMGFGAWIGMLFVDHYHTNPVLVSFCHILITSHKDRKLQKTVKYWCLNQSAGPRFSARARTRWFLLQTLINNPRLVMLRKSKSGHSSGEFTQILLTCSDC</sequence>
<evidence type="ECO:0000255" key="1"/>
<evidence type="ECO:0000269" key="2">
    <source>
    </source>
</evidence>
<evidence type="ECO:0000303" key="3">
    <source>
    </source>
</evidence>
<evidence type="ECO:0000305" key="4"/>
<evidence type="ECO:0000312" key="5">
    <source>
        <dbReference type="EMBL" id="AAI12409.1"/>
    </source>
</evidence>
<evidence type="ECO:0000312" key="6">
    <source>
        <dbReference type="EMBL" id="BAB23619.1"/>
    </source>
</evidence>
<evidence type="ECO:0000312" key="7">
    <source>
        <dbReference type="EMBL" id="EDL02387.1"/>
    </source>
</evidence>
<evidence type="ECO:0000312" key="8">
    <source>
        <dbReference type="MGI" id="MGI:1921402"/>
    </source>
</evidence>
<evidence type="ECO:0000312" key="9">
    <source>
        <dbReference type="Proteomes" id="UP000000589"/>
    </source>
</evidence>
<evidence type="ECO:0007744" key="10">
    <source>
    </source>
</evidence>
<keyword id="KW-0025">Alternative splicing</keyword>
<keyword id="KW-1003">Cell membrane</keyword>
<keyword id="KW-0325">Glycoprotein</keyword>
<keyword id="KW-0472">Membrane</keyword>
<keyword id="KW-0597">Phosphoprotein</keyword>
<keyword id="KW-0675">Receptor</keyword>
<keyword id="KW-1185">Reference proteome</keyword>
<keyword id="KW-0812">Transmembrane</keyword>
<keyword id="KW-1133">Transmembrane helix</keyword>
<keyword id="KW-0813">Transport</keyword>
<comment type="function">
    <text evidence="2">Acts as a high-affinity cell-surface receptor for retinol-binding protein RBP4 and mediates RBP4-dependent retinol uptake in the liver.</text>
</comment>
<comment type="subcellular location">
    <subcellularLocation>
        <location evidence="2">Cell membrane</location>
        <topology evidence="1">Multi-pass membrane protein</topology>
    </subcellularLocation>
</comment>
<comment type="alternative products">
    <event type="alternative splicing"/>
    <isoform>
        <id>Q9DBN1-1</id>
        <name>1</name>
        <sequence type="displayed"/>
    </isoform>
    <isoform>
        <id>Q9DBN1-2</id>
        <name>2</name>
        <sequence type="described" ref="VSP_058654"/>
    </isoform>
</comment>
<comment type="tissue specificity">
    <text evidence="2">Highly expressed in liver and small intestine. Also expressed in spleen, kidney, colon, stomach, placenta, adipose tissue and isolated adipocytes.</text>
</comment>
<comment type="induction">
    <text evidence="2">Induced in adipose tissue after high fat diet. Down-regulated by holo-RBP4, retinol and retinoic acid.</text>
</comment>
<comment type="PTM">
    <text evidence="2">Glycosylated.</text>
</comment>
<name>STR6L_MOUSE</name>
<accession>Q9DBN1</accession>
<accession>B1AWX8</accession>
<accession>Q14DP6</accession>
<accession>Q14DS9</accession>
<accession>Q8C7I6</accession>
<organism evidence="6">
    <name type="scientific">Mus musculus</name>
    <name type="common">Mouse</name>
    <dbReference type="NCBI Taxonomy" id="10090"/>
    <lineage>
        <taxon>Eukaryota</taxon>
        <taxon>Metazoa</taxon>
        <taxon>Chordata</taxon>
        <taxon>Craniata</taxon>
        <taxon>Vertebrata</taxon>
        <taxon>Euteleostomi</taxon>
        <taxon>Mammalia</taxon>
        <taxon>Eutheria</taxon>
        <taxon>Euarchontoglires</taxon>
        <taxon>Glires</taxon>
        <taxon>Rodentia</taxon>
        <taxon>Myomorpha</taxon>
        <taxon>Muroidea</taxon>
        <taxon>Muridae</taxon>
        <taxon>Murinae</taxon>
        <taxon>Mus</taxon>
        <taxon>Mus</taxon>
    </lineage>
</organism>
<proteinExistence type="evidence at protein level"/>
<feature type="chain" id="PRO_0000438364" description="Stimulated by retinoic acid gene 6 protein-like">
    <location>
        <begin position="1"/>
        <end position="621"/>
    </location>
</feature>
<feature type="topological domain" description="Extracellular" evidence="4">
    <location>
        <begin position="1"/>
        <end position="21"/>
    </location>
</feature>
<feature type="transmembrane region" description="Helical" evidence="1">
    <location>
        <begin position="22"/>
        <end position="42"/>
    </location>
</feature>
<feature type="topological domain" description="Cytoplasmic" evidence="4">
    <location>
        <begin position="43"/>
        <end position="53"/>
    </location>
</feature>
<feature type="transmembrane region" description="Helical" evidence="1">
    <location>
        <begin position="54"/>
        <end position="74"/>
    </location>
</feature>
<feature type="topological domain" description="Extracellular" evidence="4">
    <location>
        <begin position="75"/>
        <end position="110"/>
    </location>
</feature>
<feature type="transmembrane region" description="Helical" evidence="1">
    <location>
        <begin position="111"/>
        <end position="131"/>
    </location>
</feature>
<feature type="topological domain" description="Cytoplasmic" evidence="4">
    <location>
        <begin position="132"/>
        <end position="137"/>
    </location>
</feature>
<feature type="transmembrane region" description="Helical" evidence="1">
    <location>
        <begin position="138"/>
        <end position="158"/>
    </location>
</feature>
<feature type="topological domain" description="Extracellular" evidence="4">
    <location>
        <begin position="159"/>
        <end position="173"/>
    </location>
</feature>
<feature type="transmembrane region" description="Helical" evidence="1">
    <location>
        <begin position="174"/>
        <end position="194"/>
    </location>
</feature>
<feature type="topological domain" description="Cytoplasmic" evidence="4">
    <location>
        <begin position="195"/>
        <end position="258"/>
    </location>
</feature>
<feature type="transmembrane region" description="Helical" evidence="1">
    <location>
        <begin position="259"/>
        <end position="279"/>
    </location>
</feature>
<feature type="topological domain" description="Extracellular" evidence="4">
    <location>
        <begin position="280"/>
        <end position="321"/>
    </location>
</feature>
<feature type="transmembrane region" description="Helical" evidence="1">
    <location>
        <begin position="322"/>
        <end position="342"/>
    </location>
</feature>
<feature type="topological domain" description="Cytoplasmic" evidence="4">
    <location>
        <begin position="343"/>
        <end position="383"/>
    </location>
</feature>
<feature type="transmembrane region" description="Helical" evidence="1">
    <location>
        <begin position="384"/>
        <end position="404"/>
    </location>
</feature>
<feature type="topological domain" description="Extracellular" evidence="4">
    <location>
        <begin position="405"/>
        <end position="424"/>
    </location>
</feature>
<feature type="transmembrane region" description="Helical" evidence="1">
    <location>
        <begin position="425"/>
        <end position="445"/>
    </location>
</feature>
<feature type="topological domain" description="Cytoplasmic" evidence="4">
    <location>
        <begin position="446"/>
        <end position="476"/>
    </location>
</feature>
<feature type="transmembrane region" description="Helical" evidence="1">
    <location>
        <begin position="477"/>
        <end position="497"/>
    </location>
</feature>
<feature type="topological domain" description="Extracellular" evidence="4">
    <location>
        <begin position="498"/>
        <end position="621"/>
    </location>
</feature>
<feature type="modified residue" description="Phosphothreonine" evidence="10">
    <location>
        <position position="612"/>
    </location>
</feature>
<feature type="glycosylation site" description="N-linked (GlcNAc...) asparagine" evidence="1">
    <location>
        <position position="12"/>
    </location>
</feature>
<feature type="splice variant" id="VSP_058654" description="In isoform 2." evidence="4">
    <location>
        <begin position="1"/>
        <end position="91"/>
    </location>
</feature>
<feature type="sequence conflict" description="In Ref. 1; BAC34096." evidence="4" ref="1">
    <original>R</original>
    <variation>G</variation>
    <location>
        <position position="21"/>
    </location>
</feature>
<feature type="sequence conflict" description="In Ref. 4; AAI11890." evidence="4" ref="4">
    <original>G</original>
    <variation>R</variation>
    <location>
        <position position="72"/>
    </location>
</feature>
<feature type="sequence conflict" description="In Ref. 3; EDL02387 and 4; AAI11890/AAI12409." evidence="4" ref="3 4">
    <original>S</original>
    <variation>G</variation>
    <location>
        <position position="145"/>
    </location>
</feature>
<protein>
    <recommendedName>
        <fullName evidence="8">Stimulated by retinoic acid gene 6 protein-like</fullName>
        <shortName evidence="8">STRA6-like protein</shortName>
    </recommendedName>
    <alternativeName>
        <fullName evidence="3">Retinol-binding protein 4 receptor 2</fullName>
        <shortName evidence="3">RBP4 receptor 2</shortName>
    </alternativeName>
</protein>
<reference evidence="6" key="1">
    <citation type="journal article" date="2005" name="Science">
        <title>The transcriptional landscape of the mammalian genome.</title>
        <authorList>
            <person name="Carninci P."/>
            <person name="Kasukawa T."/>
            <person name="Katayama S."/>
            <person name="Gough J."/>
            <person name="Frith M.C."/>
            <person name="Maeda N."/>
            <person name="Oyama R."/>
            <person name="Ravasi T."/>
            <person name="Lenhard B."/>
            <person name="Wells C."/>
            <person name="Kodzius R."/>
            <person name="Shimokawa K."/>
            <person name="Bajic V.B."/>
            <person name="Brenner S.E."/>
            <person name="Batalov S."/>
            <person name="Forrest A.R."/>
            <person name="Zavolan M."/>
            <person name="Davis M.J."/>
            <person name="Wilming L.G."/>
            <person name="Aidinis V."/>
            <person name="Allen J.E."/>
            <person name="Ambesi-Impiombato A."/>
            <person name="Apweiler R."/>
            <person name="Aturaliya R.N."/>
            <person name="Bailey T.L."/>
            <person name="Bansal M."/>
            <person name="Baxter L."/>
            <person name="Beisel K.W."/>
            <person name="Bersano T."/>
            <person name="Bono H."/>
            <person name="Chalk A.M."/>
            <person name="Chiu K.P."/>
            <person name="Choudhary V."/>
            <person name="Christoffels A."/>
            <person name="Clutterbuck D.R."/>
            <person name="Crowe M.L."/>
            <person name="Dalla E."/>
            <person name="Dalrymple B.P."/>
            <person name="de Bono B."/>
            <person name="Della Gatta G."/>
            <person name="di Bernardo D."/>
            <person name="Down T."/>
            <person name="Engstrom P."/>
            <person name="Fagiolini M."/>
            <person name="Faulkner G."/>
            <person name="Fletcher C.F."/>
            <person name="Fukushima T."/>
            <person name="Furuno M."/>
            <person name="Futaki S."/>
            <person name="Gariboldi M."/>
            <person name="Georgii-Hemming P."/>
            <person name="Gingeras T.R."/>
            <person name="Gojobori T."/>
            <person name="Green R.E."/>
            <person name="Gustincich S."/>
            <person name="Harbers M."/>
            <person name="Hayashi Y."/>
            <person name="Hensch T.K."/>
            <person name="Hirokawa N."/>
            <person name="Hill D."/>
            <person name="Huminiecki L."/>
            <person name="Iacono M."/>
            <person name="Ikeo K."/>
            <person name="Iwama A."/>
            <person name="Ishikawa T."/>
            <person name="Jakt M."/>
            <person name="Kanapin A."/>
            <person name="Katoh M."/>
            <person name="Kawasawa Y."/>
            <person name="Kelso J."/>
            <person name="Kitamura H."/>
            <person name="Kitano H."/>
            <person name="Kollias G."/>
            <person name="Krishnan S.P."/>
            <person name="Kruger A."/>
            <person name="Kummerfeld S.K."/>
            <person name="Kurochkin I.V."/>
            <person name="Lareau L.F."/>
            <person name="Lazarevic D."/>
            <person name="Lipovich L."/>
            <person name="Liu J."/>
            <person name="Liuni S."/>
            <person name="McWilliam S."/>
            <person name="Madan Babu M."/>
            <person name="Madera M."/>
            <person name="Marchionni L."/>
            <person name="Matsuda H."/>
            <person name="Matsuzawa S."/>
            <person name="Miki H."/>
            <person name="Mignone F."/>
            <person name="Miyake S."/>
            <person name="Morris K."/>
            <person name="Mottagui-Tabar S."/>
            <person name="Mulder N."/>
            <person name="Nakano N."/>
            <person name="Nakauchi H."/>
            <person name="Ng P."/>
            <person name="Nilsson R."/>
            <person name="Nishiguchi S."/>
            <person name="Nishikawa S."/>
            <person name="Nori F."/>
            <person name="Ohara O."/>
            <person name="Okazaki Y."/>
            <person name="Orlando V."/>
            <person name="Pang K.C."/>
            <person name="Pavan W.J."/>
            <person name="Pavesi G."/>
            <person name="Pesole G."/>
            <person name="Petrovsky N."/>
            <person name="Piazza S."/>
            <person name="Reed J."/>
            <person name="Reid J.F."/>
            <person name="Ring B.Z."/>
            <person name="Ringwald M."/>
            <person name="Rost B."/>
            <person name="Ruan Y."/>
            <person name="Salzberg S.L."/>
            <person name="Sandelin A."/>
            <person name="Schneider C."/>
            <person name="Schoenbach C."/>
            <person name="Sekiguchi K."/>
            <person name="Semple C.A."/>
            <person name="Seno S."/>
            <person name="Sessa L."/>
            <person name="Sheng Y."/>
            <person name="Shibata Y."/>
            <person name="Shimada H."/>
            <person name="Shimada K."/>
            <person name="Silva D."/>
            <person name="Sinclair B."/>
            <person name="Sperling S."/>
            <person name="Stupka E."/>
            <person name="Sugiura K."/>
            <person name="Sultana R."/>
            <person name="Takenaka Y."/>
            <person name="Taki K."/>
            <person name="Tammoja K."/>
            <person name="Tan S.L."/>
            <person name="Tang S."/>
            <person name="Taylor M.S."/>
            <person name="Tegner J."/>
            <person name="Teichmann S.A."/>
            <person name="Ueda H.R."/>
            <person name="van Nimwegen E."/>
            <person name="Verardo R."/>
            <person name="Wei C.L."/>
            <person name="Yagi K."/>
            <person name="Yamanishi H."/>
            <person name="Zabarovsky E."/>
            <person name="Zhu S."/>
            <person name="Zimmer A."/>
            <person name="Hide W."/>
            <person name="Bult C."/>
            <person name="Grimmond S.M."/>
            <person name="Teasdale R.D."/>
            <person name="Liu E.T."/>
            <person name="Brusic V."/>
            <person name="Quackenbush J."/>
            <person name="Wahlestedt C."/>
            <person name="Mattick J.S."/>
            <person name="Hume D.A."/>
            <person name="Kai C."/>
            <person name="Sasaki D."/>
            <person name="Tomaru Y."/>
            <person name="Fukuda S."/>
            <person name="Kanamori-Katayama M."/>
            <person name="Suzuki M."/>
            <person name="Aoki J."/>
            <person name="Arakawa T."/>
            <person name="Iida J."/>
            <person name="Imamura K."/>
            <person name="Itoh M."/>
            <person name="Kato T."/>
            <person name="Kawaji H."/>
            <person name="Kawagashira N."/>
            <person name="Kawashima T."/>
            <person name="Kojima M."/>
            <person name="Kondo S."/>
            <person name="Konno H."/>
            <person name="Nakano K."/>
            <person name="Ninomiya N."/>
            <person name="Nishio T."/>
            <person name="Okada M."/>
            <person name="Plessy C."/>
            <person name="Shibata K."/>
            <person name="Shiraki T."/>
            <person name="Suzuki S."/>
            <person name="Tagami M."/>
            <person name="Waki K."/>
            <person name="Watahiki A."/>
            <person name="Okamura-Oho Y."/>
            <person name="Suzuki H."/>
            <person name="Kawai J."/>
            <person name="Hayashizaki Y."/>
        </authorList>
    </citation>
    <scope>NUCLEOTIDE SEQUENCE [LARGE SCALE MRNA] (ISOFORM 1)</scope>
    <source>
        <strain evidence="6">C57BL/6J</strain>
        <tissue evidence="6">Liver</tissue>
    </source>
</reference>
<reference evidence="9" key="2">
    <citation type="journal article" date="2009" name="PLoS Biol.">
        <title>Lineage-specific biology revealed by a finished genome assembly of the mouse.</title>
        <authorList>
            <person name="Church D.M."/>
            <person name="Goodstadt L."/>
            <person name="Hillier L.W."/>
            <person name="Zody M.C."/>
            <person name="Goldstein S."/>
            <person name="She X."/>
            <person name="Bult C.J."/>
            <person name="Agarwala R."/>
            <person name="Cherry J.L."/>
            <person name="DiCuccio M."/>
            <person name="Hlavina W."/>
            <person name="Kapustin Y."/>
            <person name="Meric P."/>
            <person name="Maglott D."/>
            <person name="Birtle Z."/>
            <person name="Marques A.C."/>
            <person name="Graves T."/>
            <person name="Zhou S."/>
            <person name="Teague B."/>
            <person name="Potamousis K."/>
            <person name="Churas C."/>
            <person name="Place M."/>
            <person name="Herschleb J."/>
            <person name="Runnheim R."/>
            <person name="Forrest D."/>
            <person name="Amos-Landgraf J."/>
            <person name="Schwartz D.C."/>
            <person name="Cheng Z."/>
            <person name="Lindblad-Toh K."/>
            <person name="Eichler E.E."/>
            <person name="Ponting C.P."/>
        </authorList>
    </citation>
    <scope>NUCLEOTIDE SEQUENCE [LARGE SCALE GENOMIC DNA]</scope>
    <source>
        <strain evidence="9">C57BL/6J</strain>
    </source>
</reference>
<reference evidence="7" key="3">
    <citation type="submission" date="2005-09" db="EMBL/GenBank/DDBJ databases">
        <authorList>
            <person name="Mural R.J."/>
            <person name="Adams M.D."/>
            <person name="Myers E.W."/>
            <person name="Smith H.O."/>
            <person name="Venter J.C."/>
        </authorList>
    </citation>
    <scope>NUCLEOTIDE SEQUENCE [LARGE SCALE GENOMIC DNA]</scope>
</reference>
<reference evidence="5" key="4">
    <citation type="journal article" date="2004" name="Genome Res.">
        <title>The status, quality, and expansion of the NIH full-length cDNA project: the Mammalian Gene Collection (MGC).</title>
        <authorList>
            <consortium name="The MGC Project Team"/>
        </authorList>
    </citation>
    <scope>NUCLEOTIDE SEQUENCE [LARGE SCALE MRNA] (ISOFORM 1)</scope>
</reference>
<reference key="5">
    <citation type="journal article" date="2007" name="Proc. Natl. Acad. Sci. U.S.A.">
        <title>Large-scale phosphorylation analysis of mouse liver.</title>
        <authorList>
            <person name="Villen J."/>
            <person name="Beausoleil S.A."/>
            <person name="Gerber S.A."/>
            <person name="Gygi S.P."/>
        </authorList>
    </citation>
    <scope>PHOSPHORYLATION [LARGE SCALE ANALYSIS] AT THR-612</scope>
    <scope>IDENTIFICATION BY MASS SPECTROMETRY [LARGE SCALE ANALYSIS]</scope>
    <source>
        <tissue>Liver</tissue>
    </source>
</reference>
<reference evidence="4" key="6">
    <citation type="journal article" date="2013" name="J. Biol. Chem.">
        <title>Liver retinol transporter and receptor for serum retinol-binding protein (RBP4).</title>
        <authorList>
            <person name="Alapatt P."/>
            <person name="Guo F."/>
            <person name="Komanetsky S.M."/>
            <person name="Wang S."/>
            <person name="Cai J."/>
            <person name="Sargsyan A."/>
            <person name="Rodriguez Diaz E."/>
            <person name="Bacon B.T."/>
            <person name="Aryal P."/>
            <person name="Graham T.E."/>
        </authorList>
    </citation>
    <scope>FUNCTION</scope>
    <scope>SUBCELLULAR LOCATION</scope>
    <scope>TISSUE SPECIFICITY</scope>
    <scope>INDUCTION</scope>
    <scope>GLYCOSYLATION</scope>
</reference>